<organism>
    <name type="scientific">Pyropia yezoensis</name>
    <name type="common">Susabi-nori</name>
    <name type="synonym">Porphyra yezoensis</name>
    <dbReference type="NCBI Taxonomy" id="2788"/>
    <lineage>
        <taxon>Eukaryota</taxon>
        <taxon>Rhodophyta</taxon>
        <taxon>Bangiophyceae</taxon>
        <taxon>Bangiales</taxon>
        <taxon>Bangiaceae</taxon>
        <taxon>Pyropia</taxon>
    </lineage>
</organism>
<geneLocation type="chloroplast"/>
<sequence length="115" mass="13384">MSRVKRGNVAKKRRAKIFKLAKGFKGAHKCLFRTAKQQVLKALRYSYVGRKRKKRDFRRLWITRINAAAHNQGMNYSTFISALKKENIALNRKMLAQLASNDIQTFQTVLETVKN</sequence>
<protein>
    <recommendedName>
        <fullName evidence="1">Large ribosomal subunit protein bL20c</fullName>
    </recommendedName>
    <alternativeName>
        <fullName evidence="2">50S ribosomal protein L20, chloroplastic</fullName>
    </alternativeName>
</protein>
<accession>Q1XDL7</accession>
<reference key="1">
    <citation type="submission" date="2003-11" db="EMBL/GenBank/DDBJ databases">
        <title>Whole genome sequence of Porphyra yezoensis chloroplast.</title>
        <authorList>
            <person name="Kunimoto M."/>
            <person name="Morishima K."/>
            <person name="Yoshikawa M."/>
            <person name="Fukuda S."/>
            <person name="Kobayashi T."/>
            <person name="Kobayashi M."/>
            <person name="Okazaki T."/>
            <person name="Ohara I."/>
            <person name="Nakayama I."/>
        </authorList>
    </citation>
    <scope>NUCLEOTIDE SEQUENCE [LARGE SCALE GENOMIC DNA]</scope>
    <source>
        <strain>U-51</strain>
    </source>
</reference>
<name>RK20_PYRYE</name>
<comment type="function">
    <text evidence="1">Binds directly to 23S ribosomal RNA and is necessary for the in vitro assembly process of the 50S ribosomal subunit. It is not involved in the protein synthesizing functions of that subunit.</text>
</comment>
<comment type="subcellular location">
    <subcellularLocation>
        <location>Plastid</location>
        <location>Chloroplast</location>
    </subcellularLocation>
</comment>
<comment type="similarity">
    <text evidence="1">Belongs to the bacterial ribosomal protein bL20 family.</text>
</comment>
<proteinExistence type="inferred from homology"/>
<gene>
    <name evidence="1" type="primary">rpl20</name>
</gene>
<evidence type="ECO:0000255" key="1">
    <source>
        <dbReference type="HAMAP-Rule" id="MF_00382"/>
    </source>
</evidence>
<evidence type="ECO:0000305" key="2"/>
<dbReference type="EMBL" id="AP006715">
    <property type="protein sequence ID" value="BAE92394.1"/>
    <property type="molecule type" value="Genomic_DNA"/>
</dbReference>
<dbReference type="RefSeq" id="YP_536951.1">
    <property type="nucleotide sequence ID" value="NC_007932.1"/>
</dbReference>
<dbReference type="SMR" id="Q1XDL7"/>
<dbReference type="GeneID" id="3978863"/>
<dbReference type="GO" id="GO:0009507">
    <property type="term" value="C:chloroplast"/>
    <property type="evidence" value="ECO:0007669"/>
    <property type="project" value="UniProtKB-SubCell"/>
</dbReference>
<dbReference type="GO" id="GO:1990904">
    <property type="term" value="C:ribonucleoprotein complex"/>
    <property type="evidence" value="ECO:0007669"/>
    <property type="project" value="UniProtKB-KW"/>
</dbReference>
<dbReference type="GO" id="GO:0005840">
    <property type="term" value="C:ribosome"/>
    <property type="evidence" value="ECO:0007669"/>
    <property type="project" value="UniProtKB-KW"/>
</dbReference>
<dbReference type="GO" id="GO:0019843">
    <property type="term" value="F:rRNA binding"/>
    <property type="evidence" value="ECO:0007669"/>
    <property type="project" value="UniProtKB-UniRule"/>
</dbReference>
<dbReference type="GO" id="GO:0003735">
    <property type="term" value="F:structural constituent of ribosome"/>
    <property type="evidence" value="ECO:0007669"/>
    <property type="project" value="InterPro"/>
</dbReference>
<dbReference type="GO" id="GO:0000027">
    <property type="term" value="P:ribosomal large subunit assembly"/>
    <property type="evidence" value="ECO:0007669"/>
    <property type="project" value="UniProtKB-UniRule"/>
</dbReference>
<dbReference type="GO" id="GO:0006412">
    <property type="term" value="P:translation"/>
    <property type="evidence" value="ECO:0007669"/>
    <property type="project" value="InterPro"/>
</dbReference>
<dbReference type="CDD" id="cd07026">
    <property type="entry name" value="Ribosomal_L20"/>
    <property type="match status" value="1"/>
</dbReference>
<dbReference type="FunFam" id="1.10.1900.20:FF:000001">
    <property type="entry name" value="50S ribosomal protein L20"/>
    <property type="match status" value="1"/>
</dbReference>
<dbReference type="Gene3D" id="6.10.160.10">
    <property type="match status" value="1"/>
</dbReference>
<dbReference type="Gene3D" id="1.10.1900.20">
    <property type="entry name" value="Ribosomal protein L20"/>
    <property type="match status" value="1"/>
</dbReference>
<dbReference type="HAMAP" id="MF_00382">
    <property type="entry name" value="Ribosomal_bL20"/>
    <property type="match status" value="1"/>
</dbReference>
<dbReference type="InterPro" id="IPR005813">
    <property type="entry name" value="Ribosomal_bL20"/>
</dbReference>
<dbReference type="InterPro" id="IPR049946">
    <property type="entry name" value="RIBOSOMAL_L20_CS"/>
</dbReference>
<dbReference type="InterPro" id="IPR035566">
    <property type="entry name" value="Ribosomal_protein_bL20_C"/>
</dbReference>
<dbReference type="NCBIfam" id="TIGR01032">
    <property type="entry name" value="rplT_bact"/>
    <property type="match status" value="1"/>
</dbReference>
<dbReference type="PANTHER" id="PTHR10986">
    <property type="entry name" value="39S RIBOSOMAL PROTEIN L20"/>
    <property type="match status" value="1"/>
</dbReference>
<dbReference type="Pfam" id="PF00453">
    <property type="entry name" value="Ribosomal_L20"/>
    <property type="match status" value="1"/>
</dbReference>
<dbReference type="PRINTS" id="PR00062">
    <property type="entry name" value="RIBOSOMALL20"/>
</dbReference>
<dbReference type="SUPFAM" id="SSF74731">
    <property type="entry name" value="Ribosomal protein L20"/>
    <property type="match status" value="1"/>
</dbReference>
<dbReference type="PROSITE" id="PS00937">
    <property type="entry name" value="RIBOSOMAL_L20"/>
    <property type="match status" value="1"/>
</dbReference>
<keyword id="KW-0150">Chloroplast</keyword>
<keyword id="KW-0934">Plastid</keyword>
<keyword id="KW-0687">Ribonucleoprotein</keyword>
<keyword id="KW-0689">Ribosomal protein</keyword>
<keyword id="KW-0694">RNA-binding</keyword>
<keyword id="KW-0699">rRNA-binding</keyword>
<feature type="chain" id="PRO_0000276435" description="Large ribosomal subunit protein bL20c">
    <location>
        <begin position="1"/>
        <end position="115"/>
    </location>
</feature>